<proteinExistence type="inferred from homology"/>
<protein>
    <recommendedName>
        <fullName evidence="1">Large ribosomal subunit protein uL5</fullName>
    </recommendedName>
    <alternativeName>
        <fullName evidence="2">50S ribosomal protein L5</fullName>
    </alternativeName>
</protein>
<dbReference type="EMBL" id="CP000726">
    <property type="protein sequence ID" value="ABS32915.1"/>
    <property type="molecule type" value="Genomic_DNA"/>
</dbReference>
<dbReference type="RefSeq" id="WP_003357534.1">
    <property type="nucleotide sequence ID" value="NC_009697.1"/>
</dbReference>
<dbReference type="SMR" id="A7FZ57"/>
<dbReference type="GeneID" id="5187726"/>
<dbReference type="KEGG" id="cba:CLB_3525"/>
<dbReference type="HOGENOM" id="CLU_061015_2_1_9"/>
<dbReference type="GO" id="GO:1990904">
    <property type="term" value="C:ribonucleoprotein complex"/>
    <property type="evidence" value="ECO:0007669"/>
    <property type="project" value="UniProtKB-KW"/>
</dbReference>
<dbReference type="GO" id="GO:0005840">
    <property type="term" value="C:ribosome"/>
    <property type="evidence" value="ECO:0007669"/>
    <property type="project" value="UniProtKB-KW"/>
</dbReference>
<dbReference type="GO" id="GO:0019843">
    <property type="term" value="F:rRNA binding"/>
    <property type="evidence" value="ECO:0007669"/>
    <property type="project" value="UniProtKB-UniRule"/>
</dbReference>
<dbReference type="GO" id="GO:0003735">
    <property type="term" value="F:structural constituent of ribosome"/>
    <property type="evidence" value="ECO:0007669"/>
    <property type="project" value="InterPro"/>
</dbReference>
<dbReference type="GO" id="GO:0000049">
    <property type="term" value="F:tRNA binding"/>
    <property type="evidence" value="ECO:0007669"/>
    <property type="project" value="UniProtKB-UniRule"/>
</dbReference>
<dbReference type="GO" id="GO:0006412">
    <property type="term" value="P:translation"/>
    <property type="evidence" value="ECO:0007669"/>
    <property type="project" value="UniProtKB-UniRule"/>
</dbReference>
<dbReference type="FunFam" id="3.30.1440.10:FF:000001">
    <property type="entry name" value="50S ribosomal protein L5"/>
    <property type="match status" value="1"/>
</dbReference>
<dbReference type="Gene3D" id="3.30.1440.10">
    <property type="match status" value="1"/>
</dbReference>
<dbReference type="HAMAP" id="MF_01333_B">
    <property type="entry name" value="Ribosomal_uL5_B"/>
    <property type="match status" value="1"/>
</dbReference>
<dbReference type="InterPro" id="IPR002132">
    <property type="entry name" value="Ribosomal_uL5"/>
</dbReference>
<dbReference type="InterPro" id="IPR020930">
    <property type="entry name" value="Ribosomal_uL5_bac-type"/>
</dbReference>
<dbReference type="InterPro" id="IPR031309">
    <property type="entry name" value="Ribosomal_uL5_C"/>
</dbReference>
<dbReference type="InterPro" id="IPR020929">
    <property type="entry name" value="Ribosomal_uL5_CS"/>
</dbReference>
<dbReference type="InterPro" id="IPR022803">
    <property type="entry name" value="Ribosomal_uL5_dom_sf"/>
</dbReference>
<dbReference type="InterPro" id="IPR031310">
    <property type="entry name" value="Ribosomal_uL5_N"/>
</dbReference>
<dbReference type="NCBIfam" id="NF000585">
    <property type="entry name" value="PRK00010.1"/>
    <property type="match status" value="1"/>
</dbReference>
<dbReference type="PANTHER" id="PTHR11994">
    <property type="entry name" value="60S RIBOSOMAL PROTEIN L11-RELATED"/>
    <property type="match status" value="1"/>
</dbReference>
<dbReference type="Pfam" id="PF00281">
    <property type="entry name" value="Ribosomal_L5"/>
    <property type="match status" value="1"/>
</dbReference>
<dbReference type="Pfam" id="PF00673">
    <property type="entry name" value="Ribosomal_L5_C"/>
    <property type="match status" value="1"/>
</dbReference>
<dbReference type="PIRSF" id="PIRSF002161">
    <property type="entry name" value="Ribosomal_L5"/>
    <property type="match status" value="1"/>
</dbReference>
<dbReference type="SUPFAM" id="SSF55282">
    <property type="entry name" value="RL5-like"/>
    <property type="match status" value="1"/>
</dbReference>
<dbReference type="PROSITE" id="PS00358">
    <property type="entry name" value="RIBOSOMAL_L5"/>
    <property type="match status" value="1"/>
</dbReference>
<reference key="1">
    <citation type="journal article" date="2007" name="PLoS ONE">
        <title>Analysis of the neurotoxin complex genes in Clostridium botulinum A1-A4 and B1 strains: BoNT/A3, /Ba4 and /B1 clusters are located within plasmids.</title>
        <authorList>
            <person name="Smith T.J."/>
            <person name="Hill K.K."/>
            <person name="Foley B.T."/>
            <person name="Detter J.C."/>
            <person name="Munk A.C."/>
            <person name="Bruce D.C."/>
            <person name="Doggett N.A."/>
            <person name="Smith L.A."/>
            <person name="Marks J.D."/>
            <person name="Xie G."/>
            <person name="Brettin T.S."/>
        </authorList>
    </citation>
    <scope>NUCLEOTIDE SEQUENCE [LARGE SCALE GENOMIC DNA]</scope>
    <source>
        <strain>ATCC 19397 / Type A</strain>
    </source>
</reference>
<organism>
    <name type="scientific">Clostridium botulinum (strain ATCC 19397 / Type A)</name>
    <dbReference type="NCBI Taxonomy" id="441770"/>
    <lineage>
        <taxon>Bacteria</taxon>
        <taxon>Bacillati</taxon>
        <taxon>Bacillota</taxon>
        <taxon>Clostridia</taxon>
        <taxon>Eubacteriales</taxon>
        <taxon>Clostridiaceae</taxon>
        <taxon>Clostridium</taxon>
    </lineage>
</organism>
<evidence type="ECO:0000255" key="1">
    <source>
        <dbReference type="HAMAP-Rule" id="MF_01333"/>
    </source>
</evidence>
<evidence type="ECO:0000305" key="2"/>
<comment type="function">
    <text evidence="1">This is one of the proteins that bind and probably mediate the attachment of the 5S RNA into the large ribosomal subunit, where it forms part of the central protuberance. In the 70S ribosome it contacts protein S13 of the 30S subunit (bridge B1b), connecting the 2 subunits; this bridge is implicated in subunit movement. Contacts the P site tRNA; the 5S rRNA and some of its associated proteins might help stabilize positioning of ribosome-bound tRNAs.</text>
</comment>
<comment type="subunit">
    <text evidence="1">Part of the 50S ribosomal subunit; part of the 5S rRNA/L5/L18/L25 subcomplex. Contacts the 5S rRNA and the P site tRNA. Forms a bridge to the 30S subunit in the 70S ribosome.</text>
</comment>
<comment type="similarity">
    <text evidence="1">Belongs to the universal ribosomal protein uL5 family.</text>
</comment>
<feature type="chain" id="PRO_1000052719" description="Large ribosomal subunit protein uL5">
    <location>
        <begin position="1"/>
        <end position="180"/>
    </location>
</feature>
<sequence length="180" mass="20512">MMPRLQEKYEKEVVSALMDKFGYKNIMEVPKLEKIVINMGVGEAKENQKSLEAAVEDLAKITGQKPILTKAKKSVANFKIREDMPLGCKVTLRKQNMYEFADKLINVALPRVRDFSGVSSKSFDGRGNYAIGIKEQLIFPEIEFDKIDKIRGMDIIFVTTAKTDEEARELLRFLGMPFAR</sequence>
<accession>A7FZ57</accession>
<gene>
    <name evidence="1" type="primary">rplE</name>
    <name type="ordered locus">CLB_3525</name>
</gene>
<name>RL5_CLOB1</name>
<keyword id="KW-0687">Ribonucleoprotein</keyword>
<keyword id="KW-0689">Ribosomal protein</keyword>
<keyword id="KW-0694">RNA-binding</keyword>
<keyword id="KW-0699">rRNA-binding</keyword>
<keyword id="KW-0820">tRNA-binding</keyword>